<organism>
    <name type="scientific">Saccharomyces cerevisiae (strain ATCC 204508 / S288c)</name>
    <name type="common">Baker's yeast</name>
    <dbReference type="NCBI Taxonomy" id="559292"/>
    <lineage>
        <taxon>Eukaryota</taxon>
        <taxon>Fungi</taxon>
        <taxon>Dikarya</taxon>
        <taxon>Ascomycota</taxon>
        <taxon>Saccharomycotina</taxon>
        <taxon>Saccharomycetes</taxon>
        <taxon>Saccharomycetales</taxon>
        <taxon>Saccharomycetaceae</taxon>
        <taxon>Saccharomyces</taxon>
    </lineage>
</organism>
<proteinExistence type="predicted"/>
<reference key="1">
    <citation type="journal article" date="1997" name="Nature">
        <title>The nucleotide sequence of Saccharomyces cerevisiae chromosome XII.</title>
        <authorList>
            <person name="Johnston M."/>
            <person name="Hillier L.W."/>
            <person name="Riles L."/>
            <person name="Albermann K."/>
            <person name="Andre B."/>
            <person name="Ansorge W."/>
            <person name="Benes V."/>
            <person name="Brueckner M."/>
            <person name="Delius H."/>
            <person name="Dubois E."/>
            <person name="Duesterhoeft A."/>
            <person name="Entian K.-D."/>
            <person name="Floeth M."/>
            <person name="Goffeau A."/>
            <person name="Hebling U."/>
            <person name="Heumann K."/>
            <person name="Heuss-Neitzel D."/>
            <person name="Hilbert H."/>
            <person name="Hilger F."/>
            <person name="Kleine K."/>
            <person name="Koetter P."/>
            <person name="Louis E.J."/>
            <person name="Messenguy F."/>
            <person name="Mewes H.-W."/>
            <person name="Miosga T."/>
            <person name="Moestl D."/>
            <person name="Mueller-Auer S."/>
            <person name="Nentwich U."/>
            <person name="Obermaier B."/>
            <person name="Piravandi E."/>
            <person name="Pohl T.M."/>
            <person name="Portetelle D."/>
            <person name="Purnelle B."/>
            <person name="Rechmann S."/>
            <person name="Rieger M."/>
            <person name="Rinke M."/>
            <person name="Rose M."/>
            <person name="Scharfe M."/>
            <person name="Scherens B."/>
            <person name="Scholler P."/>
            <person name="Schwager C."/>
            <person name="Schwarz S."/>
            <person name="Underwood A.P."/>
            <person name="Urrestarazu L.A."/>
            <person name="Vandenbol M."/>
            <person name="Verhasselt P."/>
            <person name="Vierendeels F."/>
            <person name="Voet M."/>
            <person name="Volckaert G."/>
            <person name="Voss H."/>
            <person name="Wambutt R."/>
            <person name="Wedler E."/>
            <person name="Wedler H."/>
            <person name="Zimmermann F.K."/>
            <person name="Zollner A."/>
            <person name="Hani J."/>
            <person name="Hoheisel J.D."/>
        </authorList>
    </citation>
    <scope>NUCLEOTIDE SEQUENCE [LARGE SCALE GENOMIC DNA]</scope>
    <source>
        <strain>ATCC 204508 / S288c</strain>
    </source>
</reference>
<reference key="2">
    <citation type="journal article" date="2014" name="G3 (Bethesda)">
        <title>The reference genome sequence of Saccharomyces cerevisiae: Then and now.</title>
        <authorList>
            <person name="Engel S.R."/>
            <person name="Dietrich F.S."/>
            <person name="Fisk D.G."/>
            <person name="Binkley G."/>
            <person name="Balakrishnan R."/>
            <person name="Costanzo M.C."/>
            <person name="Dwight S.S."/>
            <person name="Hitz B.C."/>
            <person name="Karra K."/>
            <person name="Nash R.S."/>
            <person name="Weng S."/>
            <person name="Wong E.D."/>
            <person name="Lloyd P."/>
            <person name="Skrzypek M.S."/>
            <person name="Miyasato S.R."/>
            <person name="Simison M."/>
            <person name="Cherry J.M."/>
        </authorList>
    </citation>
    <scope>GENOME REANNOTATION</scope>
    <source>
        <strain>ATCC 204508 / S288c</strain>
    </source>
</reference>
<reference key="3">
    <citation type="journal article" date="2003" name="Genome Res.">
        <title>Systematic discovery of new genes in the Saccharomyces cerevisiae genome.</title>
        <authorList>
            <person name="Kessler M.M."/>
            <person name="Zeng Q."/>
            <person name="Hogan S."/>
            <person name="Cook R."/>
            <person name="Morales A.J."/>
            <person name="Cottarel G."/>
        </authorList>
    </citation>
    <scope>GENOME REANNOTATION</scope>
</reference>
<keyword id="KW-0472">Membrane</keyword>
<keyword id="KW-1185">Reference proteome</keyword>
<keyword id="KW-0812">Transmembrane</keyword>
<keyword id="KW-1133">Transmembrane helix</keyword>
<sequence length="58" mass="6752">MTQLSQSNVERVALVYISVYFFSCISLIVYFFTFCLSVSIPKNRQHPIKIIYNNKCPS</sequence>
<comment type="subcellular location">
    <subcellularLocation>
        <location evidence="2">Membrane</location>
        <topology evidence="2">Single-pass membrane protein</topology>
    </subcellularLocation>
</comment>
<protein>
    <recommendedName>
        <fullName>Uncharacterized protein YLL006W-A</fullName>
    </recommendedName>
</protein>
<dbReference type="EMBL" id="Z73111">
    <property type="status" value="NOT_ANNOTATED_CDS"/>
    <property type="molecule type" value="Genomic_DNA"/>
</dbReference>
<dbReference type="EMBL" id="BK006945">
    <property type="protein sequence ID" value="DAA09312.1"/>
    <property type="molecule type" value="Genomic_DNA"/>
</dbReference>
<dbReference type="RefSeq" id="NP_878116.1">
    <property type="nucleotide sequence ID" value="NM_001184559.1"/>
</dbReference>
<dbReference type="SMR" id="Q3E814"/>
<dbReference type="BioGRID" id="36949">
    <property type="interactions" value="84"/>
</dbReference>
<dbReference type="FunCoup" id="Q3E814">
    <property type="interactions" value="5"/>
</dbReference>
<dbReference type="STRING" id="4932.YLL006W-A"/>
<dbReference type="PaxDb" id="4932-YLL006W-A"/>
<dbReference type="EnsemblFungi" id="YLL006W-A_mRNA">
    <property type="protein sequence ID" value="YLL006W-A"/>
    <property type="gene ID" value="YLL006W-A"/>
</dbReference>
<dbReference type="GeneID" id="1466403"/>
<dbReference type="KEGG" id="sce:YLL006W-A"/>
<dbReference type="AGR" id="SGD:S000028560"/>
<dbReference type="SGD" id="S000028560">
    <property type="gene designation" value="YLL006W-A"/>
</dbReference>
<dbReference type="VEuPathDB" id="FungiDB:YLL006W-A"/>
<dbReference type="HOGENOM" id="CLU_2980861_0_0_1"/>
<dbReference type="InParanoid" id="Q3E814"/>
<dbReference type="BioCyc" id="YEAST:G3O-32574-MONOMER"/>
<dbReference type="BioGRID-ORCS" id="1466403">
    <property type="hits" value="0 hits in 10 CRISPR screens"/>
</dbReference>
<dbReference type="PRO" id="PR:Q3E814"/>
<dbReference type="Proteomes" id="UP000002311">
    <property type="component" value="Chromosome XII"/>
</dbReference>
<dbReference type="RNAct" id="Q3E814">
    <property type="molecule type" value="protein"/>
</dbReference>
<dbReference type="GO" id="GO:0016020">
    <property type="term" value="C:membrane"/>
    <property type="evidence" value="ECO:0007669"/>
    <property type="project" value="UniProtKB-SubCell"/>
</dbReference>
<accession>Q3E814</accession>
<accession>D6VXZ6</accession>
<name>YL006_YEAST</name>
<feature type="chain" id="PRO_0000247097" description="Uncharacterized protein YLL006W-A">
    <location>
        <begin position="1"/>
        <end position="58"/>
    </location>
</feature>
<feature type="transmembrane region" description="Helical" evidence="1">
    <location>
        <begin position="12"/>
        <end position="32"/>
    </location>
</feature>
<evidence type="ECO:0000255" key="1"/>
<evidence type="ECO:0000305" key="2"/>
<gene>
    <name type="ordered locus">YLL006W-A</name>
</gene>